<reference key="1">
    <citation type="journal article" date="1998" name="DNA Res.">
        <title>Structural analysis of Arabidopsis thaliana chromosome 5. VIII. Sequence features of the regions of 1,081,958 bp covered by seventeen physically assigned P1 and TAC clones.</title>
        <authorList>
            <person name="Asamizu E."/>
            <person name="Sato S."/>
            <person name="Kaneko T."/>
            <person name="Nakamura Y."/>
            <person name="Kotani H."/>
            <person name="Miyajima N."/>
            <person name="Tabata S."/>
        </authorList>
    </citation>
    <scope>NUCLEOTIDE SEQUENCE [LARGE SCALE GENOMIC DNA]</scope>
    <source>
        <strain>cv. Columbia</strain>
    </source>
</reference>
<reference key="2">
    <citation type="journal article" date="2017" name="Plant J.">
        <title>Araport11: a complete reannotation of the Arabidopsis thaliana reference genome.</title>
        <authorList>
            <person name="Cheng C.Y."/>
            <person name="Krishnakumar V."/>
            <person name="Chan A.P."/>
            <person name="Thibaud-Nissen F."/>
            <person name="Schobel S."/>
            <person name="Town C.D."/>
        </authorList>
    </citation>
    <scope>GENOME REANNOTATION</scope>
    <source>
        <strain>cv. Columbia</strain>
    </source>
</reference>
<reference key="3">
    <citation type="submission" date="2005-03" db="EMBL/GenBank/DDBJ databases">
        <title>Large-scale analysis of RIKEN Arabidopsis full-length (RAFL) cDNAs.</title>
        <authorList>
            <person name="Totoki Y."/>
            <person name="Seki M."/>
            <person name="Ishida J."/>
            <person name="Nakajima M."/>
            <person name="Enju A."/>
            <person name="Kamiya A."/>
            <person name="Narusaka M."/>
            <person name="Shin-i T."/>
            <person name="Nakagawa M."/>
            <person name="Sakamoto N."/>
            <person name="Oishi K."/>
            <person name="Kohara Y."/>
            <person name="Kobayashi M."/>
            <person name="Toyoda A."/>
            <person name="Sakaki Y."/>
            <person name="Sakurai T."/>
            <person name="Iida K."/>
            <person name="Akiyama K."/>
            <person name="Satou M."/>
            <person name="Toyoda T."/>
            <person name="Konagaya A."/>
            <person name="Carninci P."/>
            <person name="Kawai J."/>
            <person name="Hayashizaki Y."/>
            <person name="Shinozaki K."/>
        </authorList>
    </citation>
    <scope>NUCLEOTIDE SEQUENCE [LARGE SCALE MRNA] OF 336-580 (ISOFORM 1)</scope>
    <source>
        <strain>cv. Columbia</strain>
    </source>
</reference>
<reference key="4">
    <citation type="journal article" date="2005" name="Plant Physiol.">
        <title>Phylogenomic analysis of the receptor-like proteins of rice and Arabidopsis.</title>
        <authorList>
            <person name="Fritz-Laylin L.K."/>
            <person name="Krishnamurthy N."/>
            <person name="Toer M."/>
            <person name="Sjoelander K.V."/>
            <person name="Jones J.D."/>
        </authorList>
    </citation>
    <scope>GENE FAMILY</scope>
</reference>
<reference key="5">
    <citation type="journal article" date="2008" name="Plant Physiol.">
        <title>A genome-wide functional investigation into the roles of receptor-like proteins in Arabidopsis.</title>
        <authorList>
            <person name="Wang G."/>
            <person name="Ellendorff U."/>
            <person name="Kemp B."/>
            <person name="Mansfield J.W."/>
            <person name="Forsyth A."/>
            <person name="Mitchell K."/>
            <person name="Bastas K."/>
            <person name="Liu C.-M."/>
            <person name="Woods-Toer A."/>
            <person name="Zipfel C."/>
            <person name="de Wit P.J.G.M."/>
            <person name="Jones J.D.G."/>
            <person name="Toer M."/>
            <person name="Thomma B.P.H.J."/>
        </authorList>
    </citation>
    <scope>GENE FAMILY</scope>
    <scope>NOMENCLATURE</scope>
    <source>
        <strain>cv. Columbia</strain>
    </source>
</reference>
<proteinExistence type="evidence at transcript level"/>
<comment type="subcellular location">
    <subcellularLocation>
        <location evidence="4">Cell membrane</location>
        <topology evidence="4">Single-pass type I membrane protein</topology>
    </subcellularLocation>
</comment>
<comment type="alternative products">
    <event type="alternative splicing"/>
    <isoform>
        <id>F4K4T3-1</id>
        <name>1</name>
        <sequence type="displayed"/>
    </isoform>
    <isoform>
        <id>F4K4T3-2</id>
        <name>2</name>
        <sequence type="described" ref="VSP_059575"/>
    </isoform>
</comment>
<comment type="similarity">
    <text evidence="4">Belongs to the RLP family.</text>
</comment>
<comment type="sequence caution" evidence="4">
    <conflict type="erroneous initiation">
        <sequence resource="EMBL-CDS" id="AED95793"/>
    </conflict>
    <text>Truncated N-terminus.</text>
</comment>
<comment type="sequence caution" evidence="4">
    <conflict type="erroneous gene model prediction">
        <sequence resource="EMBL-CDS" id="BAB10347"/>
    </conflict>
</comment>
<comment type="sequence caution" evidence="4">
    <conflict type="erroneous initiation">
        <sequence resource="EMBL-CDS" id="BAD94265"/>
    </conflict>
    <text>Truncated N-terminus.</text>
</comment>
<comment type="sequence caution" evidence="4">
    <conflict type="frameshift">
        <sequence resource="EMBL-CDS" id="BAD94265"/>
    </conflict>
</comment>
<organism>
    <name type="scientific">Arabidopsis thaliana</name>
    <name type="common">Mouse-ear cress</name>
    <dbReference type="NCBI Taxonomy" id="3702"/>
    <lineage>
        <taxon>Eukaryota</taxon>
        <taxon>Viridiplantae</taxon>
        <taxon>Streptophyta</taxon>
        <taxon>Embryophyta</taxon>
        <taxon>Tracheophyta</taxon>
        <taxon>Spermatophyta</taxon>
        <taxon>Magnoliopsida</taxon>
        <taxon>eudicotyledons</taxon>
        <taxon>Gunneridae</taxon>
        <taxon>Pentapetalae</taxon>
        <taxon>rosids</taxon>
        <taxon>malvids</taxon>
        <taxon>Brassicales</taxon>
        <taxon>Brassicaceae</taxon>
        <taxon>Camelineae</taxon>
        <taxon>Arabidopsis</taxon>
    </lineage>
</organism>
<feature type="signal peptide" evidence="1">
    <location>
        <begin position="1"/>
        <end position="27"/>
    </location>
</feature>
<feature type="chain" id="PRO_0000444116" description="Receptor-like protein 56">
    <location>
        <begin position="28"/>
        <end position="947"/>
    </location>
</feature>
<feature type="topological domain" description="Extracellular" evidence="1">
    <location>
        <begin position="28"/>
        <end position="899"/>
    </location>
</feature>
<feature type="transmembrane region" description="Helical" evidence="1">
    <location>
        <begin position="900"/>
        <end position="920"/>
    </location>
</feature>
<feature type="topological domain" description="Cytoplasmic" evidence="1">
    <location>
        <begin position="921"/>
        <end position="947"/>
    </location>
</feature>
<feature type="repeat" description="LRR 1" evidence="1">
    <location>
        <begin position="105"/>
        <end position="128"/>
    </location>
</feature>
<feature type="repeat" description="LRR 2" evidence="1">
    <location>
        <begin position="134"/>
        <end position="157"/>
    </location>
</feature>
<feature type="repeat" description="LRR 3" evidence="1">
    <location>
        <begin position="159"/>
        <end position="182"/>
    </location>
</feature>
<feature type="repeat" description="LRR 4" evidence="1">
    <location>
        <begin position="183"/>
        <end position="207"/>
    </location>
</feature>
<feature type="repeat" description="LRR 5" evidence="1">
    <location>
        <begin position="209"/>
        <end position="232"/>
    </location>
</feature>
<feature type="repeat" description="LRR 6" evidence="1">
    <location>
        <begin position="233"/>
        <end position="257"/>
    </location>
</feature>
<feature type="repeat" description="LRR 7" evidence="1">
    <location>
        <begin position="259"/>
        <end position="281"/>
    </location>
</feature>
<feature type="repeat" description="LRR 8" evidence="1">
    <location>
        <begin position="282"/>
        <end position="305"/>
    </location>
</feature>
<feature type="repeat" description="LRR 9" evidence="1">
    <location>
        <begin position="307"/>
        <end position="330"/>
    </location>
</feature>
<feature type="repeat" description="LRR 10; degenerate" evidence="4">
    <location>
        <begin position="332"/>
        <end position="356"/>
    </location>
</feature>
<feature type="repeat" description="LRR 11" evidence="1">
    <location>
        <begin position="357"/>
        <end position="380"/>
    </location>
</feature>
<feature type="repeat" description="LRR 12" evidence="1">
    <location>
        <begin position="381"/>
        <end position="404"/>
    </location>
</feature>
<feature type="repeat" description="LRR 13" evidence="1">
    <location>
        <begin position="405"/>
        <end position="427"/>
    </location>
</feature>
<feature type="repeat" description="LRR 14" evidence="1">
    <location>
        <begin position="428"/>
        <end position="450"/>
    </location>
</feature>
<feature type="repeat" description="LRR 15" evidence="1">
    <location>
        <begin position="452"/>
        <end position="476"/>
    </location>
</feature>
<feature type="repeat" description="LRR 16" evidence="1">
    <location>
        <begin position="477"/>
        <end position="500"/>
    </location>
</feature>
<feature type="repeat" description="LRR 17" evidence="1">
    <location>
        <begin position="502"/>
        <end position="527"/>
    </location>
</feature>
<feature type="repeat" description="LRR 18" evidence="1">
    <location>
        <begin position="529"/>
        <end position="549"/>
    </location>
</feature>
<feature type="repeat" description="LRR 19" evidence="1">
    <location>
        <begin position="550"/>
        <end position="575"/>
    </location>
</feature>
<feature type="repeat" description="LRR 20" evidence="1">
    <location>
        <begin position="577"/>
        <end position="598"/>
    </location>
</feature>
<feature type="repeat" description="LRR 21" evidence="1">
    <location>
        <begin position="600"/>
        <end position="616"/>
    </location>
</feature>
<feature type="repeat" description="LRR 22" evidence="1">
    <location>
        <begin position="617"/>
        <end position="640"/>
    </location>
</feature>
<feature type="repeat" description="LRR 23" evidence="1">
    <location>
        <begin position="642"/>
        <end position="663"/>
    </location>
</feature>
<feature type="repeat" description="LRR 24" evidence="1">
    <location>
        <begin position="664"/>
        <end position="686"/>
    </location>
</feature>
<feature type="repeat" description="LRR 25" evidence="1">
    <location>
        <begin position="757"/>
        <end position="780"/>
    </location>
</feature>
<feature type="repeat" description="LRR 26" evidence="1">
    <location>
        <begin position="781"/>
        <end position="804"/>
    </location>
</feature>
<feature type="repeat" description="LRR 27" evidence="1">
    <location>
        <begin position="805"/>
        <end position="829"/>
    </location>
</feature>
<feature type="repeat" description="LRR 28" evidence="1">
    <location>
        <begin position="831"/>
        <end position="854"/>
    </location>
</feature>
<feature type="glycosylation site" description="N-linked (GlcNAc...) asparagine" evidence="2">
    <location>
        <position position="60"/>
    </location>
</feature>
<feature type="glycosylation site" description="N-linked (GlcNAc...) asparagine" evidence="2">
    <location>
        <position position="75"/>
    </location>
</feature>
<feature type="glycosylation site" description="N-linked (GlcNAc...) asparagine" evidence="2">
    <location>
        <position position="98"/>
    </location>
</feature>
<feature type="glycosylation site" description="N-linked (GlcNAc...) asparagine" evidence="2">
    <location>
        <position position="141"/>
    </location>
</feature>
<feature type="glycosylation site" description="N-linked (GlcNAc...) asparagine" evidence="2">
    <location>
        <position position="148"/>
    </location>
</feature>
<feature type="glycosylation site" description="N-linked (GlcNAc...) asparagine" evidence="2">
    <location>
        <position position="182"/>
    </location>
</feature>
<feature type="glycosylation site" description="N-linked (GlcNAc...) asparagine" evidence="2">
    <location>
        <position position="232"/>
    </location>
</feature>
<feature type="glycosylation site" description="N-linked (GlcNAc...) asparagine" evidence="2">
    <location>
        <position position="330"/>
    </location>
</feature>
<feature type="glycosylation site" description="N-linked (GlcNAc...) asparagine" evidence="2">
    <location>
        <position position="415"/>
    </location>
</feature>
<feature type="glycosylation site" description="N-linked (GlcNAc...) asparagine" evidence="2">
    <location>
        <position position="459"/>
    </location>
</feature>
<feature type="glycosylation site" description="N-linked (GlcNAc...) asparagine" evidence="2">
    <location>
        <position position="478"/>
    </location>
</feature>
<feature type="glycosylation site" description="N-linked (GlcNAc...) asparagine" evidence="2">
    <location>
        <position position="488"/>
    </location>
</feature>
<feature type="glycosylation site" description="N-linked (GlcNAc...) asparagine" evidence="2">
    <location>
        <position position="524"/>
    </location>
</feature>
<feature type="glycosylation site" description="N-linked (GlcNAc...) asparagine" evidence="2">
    <location>
        <position position="606"/>
    </location>
</feature>
<feature type="glycosylation site" description="N-linked (GlcNAc...) asparagine" evidence="2">
    <location>
        <position position="686"/>
    </location>
</feature>
<feature type="glycosylation site" description="N-linked (GlcNAc...) asparagine" evidence="2">
    <location>
        <position position="788"/>
    </location>
</feature>
<feature type="glycosylation site" description="N-linked (GlcNAc...) asparagine" evidence="2">
    <location>
        <position position="828"/>
    </location>
</feature>
<feature type="glycosylation site" description="N-linked (GlcNAc...) asparagine" evidence="2">
    <location>
        <position position="836"/>
    </location>
</feature>
<feature type="glycosylation site" description="N-linked (GlcNAc...) asparagine" evidence="2">
    <location>
        <position position="841"/>
    </location>
</feature>
<feature type="splice variant" id="VSP_059575" description="In isoform 2.">
    <location>
        <begin position="229"/>
        <end position="253"/>
    </location>
</feature>
<sequence length="947" mass="106743">MEGKVFSGQKLILVMLLLGHLHGFSSCIEKERKALLELKKFVMSRCEECEYDSVLPTWTNDTKSDCCQWENIKCNRTSRRLTGLSLYTSYYLEISLLNLSLLHPFEEVRSLDLSNSRLNGLVDDVEGYKSLRRLRNLQILNFSSNEFNNSIFPFLNAATSLTTLSLRRNNMYGPIPLKELKNLTNLELLDLSGNRIDGSMPVREFPYLKKLKALDLSSNGIYSSMEWQGLKNLTNLEVLSLGYNYFDGPIPIEVFCEMKNLQELDLRGINFVGQLPLCFGNLNKLRFLDLSSNQLTGNIPPSFSSLESLEYLSLSDNSFEGFFSLNPLTNLTKLKVFIFSSKDDMVQVKIESTWQPLFQLSVLVLRLCSLEKIPNFLMYQKNLHVVDLSGNRISGIIPTWLLENNPELEVLQLKNNSFTIFQMPTSVHNLQVLDFSENNIGGLFPDNFGRVLPNLVHMNGSNNGFQGNFPSSMGEMYNISFLDLSYNNLSGELPQSFVSSCFSLSILQLSHNKFSGHFLPRQTNFTSLIVLRINNNLFTGKIGVGLLTLVDLCILDMSNNFLEGELPPLLLVFEYLNFLDLSGNLLSGALPSHVSLDNVLFLHNNNFTGPIPDTFLGSIQILDLRNNKLSGNIPQFVDTQDISFLLLRGNSLTGYIPSTLCEFSKMRLLDLSDNKLNGFIPSCFNNLSFGLARKEEITNYYVAVALESFYLGFYKSTFVVENFRLDYSNYFEIDVKFATKQRYDSYIGAFQFSEGTLNSMYGLDLSSNELSGVIPAELGDLFKLRALNLSHNFLSSHIPDSFSKLQDIESLDLSYNMLQGSIPHQLTNLTSLAIFNVSYNNLSGIIPQGKQFNTFDENSYLGNPLLCGPPTDTSCETKKNSEENANGGEEDDKEVAIDMLVFYWSTAGTYVTALIGILVLMCVDCSWRRAWLRLVDAFIASAKSKLA</sequence>
<name>RLP56_ARATH</name>
<accession>F4K4T3</accession>
<accession>A0A1P8BAV1</accession>
<accession>Q56WY0</accession>
<accession>Q9FJ11</accession>
<protein>
    <recommendedName>
        <fullName evidence="3">Receptor-like protein 56</fullName>
        <shortName evidence="3">AtRLP56</shortName>
    </recommendedName>
</protein>
<gene>
    <name evidence="3" type="primary">RLP56</name>
    <name evidence="5" type="ordered locus">At5g49290</name>
    <name evidence="6" type="ORF">K21P3.17</name>
</gene>
<evidence type="ECO:0000255" key="1"/>
<evidence type="ECO:0000255" key="2">
    <source>
        <dbReference type="PROSITE-ProRule" id="PRU00498"/>
    </source>
</evidence>
<evidence type="ECO:0000303" key="3">
    <source>
    </source>
</evidence>
<evidence type="ECO:0000305" key="4"/>
<evidence type="ECO:0000312" key="5">
    <source>
        <dbReference type="Araport" id="AT5G49290"/>
    </source>
</evidence>
<evidence type="ECO:0000312" key="6">
    <source>
        <dbReference type="EMBL" id="BAB10347.1"/>
    </source>
</evidence>
<dbReference type="EMBL" id="AB016872">
    <property type="protein sequence ID" value="BAB10347.1"/>
    <property type="status" value="ALT_SEQ"/>
    <property type="molecule type" value="Genomic_DNA"/>
</dbReference>
<dbReference type="EMBL" id="CP002688">
    <property type="protein sequence ID" value="AED95793.1"/>
    <property type="status" value="ALT_INIT"/>
    <property type="molecule type" value="Genomic_DNA"/>
</dbReference>
<dbReference type="EMBL" id="CP002688">
    <property type="protein sequence ID" value="ANM68731.1"/>
    <property type="molecule type" value="Genomic_DNA"/>
</dbReference>
<dbReference type="EMBL" id="AK221899">
    <property type="protein sequence ID" value="BAD94265.1"/>
    <property type="status" value="ALT_SEQ"/>
    <property type="molecule type" value="mRNA"/>
</dbReference>
<dbReference type="RefSeq" id="NP_001330457.1">
    <molecule id="F4K4T3-1"/>
    <property type="nucleotide sequence ID" value="NM_001344828.1"/>
</dbReference>
<dbReference type="RefSeq" id="NP_199740.4">
    <property type="nucleotide sequence ID" value="NM_124306.5"/>
</dbReference>
<dbReference type="SMR" id="F4K4T3"/>
<dbReference type="FunCoup" id="F4K4T3">
    <property type="interactions" value="192"/>
</dbReference>
<dbReference type="STRING" id="3702.F4K4T3"/>
<dbReference type="GlyCosmos" id="F4K4T3">
    <property type="glycosylation" value="19 sites, No reported glycans"/>
</dbReference>
<dbReference type="GlyGen" id="F4K4T3">
    <property type="glycosylation" value="19 sites"/>
</dbReference>
<dbReference type="PaxDb" id="3702-AT5G49290.1"/>
<dbReference type="EnsemblPlants" id="AT5G49290.2">
    <molecule id="F4K4T3-1"/>
    <property type="protein sequence ID" value="AT5G49290.2"/>
    <property type="gene ID" value="AT5G49290"/>
</dbReference>
<dbReference type="GeneID" id="834989"/>
<dbReference type="Gramene" id="AT5G49290.2">
    <molecule id="F4K4T3-1"/>
    <property type="protein sequence ID" value="AT5G49290.2"/>
    <property type="gene ID" value="AT5G49290"/>
</dbReference>
<dbReference type="KEGG" id="ath:AT5G49290"/>
<dbReference type="Araport" id="AT5G49290"/>
<dbReference type="TAIR" id="AT5G49290">
    <property type="gene designation" value="RLP56"/>
</dbReference>
<dbReference type="eggNOG" id="KOG0619">
    <property type="taxonomic scope" value="Eukaryota"/>
</dbReference>
<dbReference type="HOGENOM" id="CLU_000288_18_3_1"/>
<dbReference type="InParanoid" id="F4K4T3"/>
<dbReference type="PRO" id="PR:F4K4T3"/>
<dbReference type="Proteomes" id="UP000006548">
    <property type="component" value="Chromosome 5"/>
</dbReference>
<dbReference type="ExpressionAtlas" id="F4K4T3">
    <property type="expression patterns" value="baseline and differential"/>
</dbReference>
<dbReference type="GO" id="GO:0005886">
    <property type="term" value="C:plasma membrane"/>
    <property type="evidence" value="ECO:0007669"/>
    <property type="project" value="UniProtKB-SubCell"/>
</dbReference>
<dbReference type="FunFam" id="3.80.10.10:FF:000041">
    <property type="entry name" value="LRR receptor-like serine/threonine-protein kinase ERECTA"/>
    <property type="match status" value="2"/>
</dbReference>
<dbReference type="FunFam" id="3.80.10.10:FF:001347">
    <property type="entry name" value="LRR receptor-like serine/threonine-protein kinase GSO2"/>
    <property type="match status" value="1"/>
</dbReference>
<dbReference type="FunFam" id="3.80.10.10:FF:000213">
    <property type="entry name" value="Tyrosine-sulfated glycopeptide receptor 1"/>
    <property type="match status" value="1"/>
</dbReference>
<dbReference type="Gene3D" id="3.80.10.10">
    <property type="entry name" value="Ribonuclease Inhibitor"/>
    <property type="match status" value="5"/>
</dbReference>
<dbReference type="InterPro" id="IPR001611">
    <property type="entry name" value="Leu-rich_rpt"/>
</dbReference>
<dbReference type="InterPro" id="IPR003591">
    <property type="entry name" value="Leu-rich_rpt_typical-subtyp"/>
</dbReference>
<dbReference type="InterPro" id="IPR032675">
    <property type="entry name" value="LRR_dom_sf"/>
</dbReference>
<dbReference type="InterPro" id="IPR013210">
    <property type="entry name" value="LRR_N_plant-typ"/>
</dbReference>
<dbReference type="InterPro" id="IPR055414">
    <property type="entry name" value="LRR_R13L4/SHOC2-like"/>
</dbReference>
<dbReference type="InterPro" id="IPR051502">
    <property type="entry name" value="RLP_Defense_Trigger"/>
</dbReference>
<dbReference type="PANTHER" id="PTHR48062">
    <property type="entry name" value="RECEPTOR-LIKE PROTEIN 14"/>
    <property type="match status" value="1"/>
</dbReference>
<dbReference type="PANTHER" id="PTHR48062:SF52">
    <property type="entry name" value="RECEPTOR-LIKE PROTEIN 8-RELATED"/>
    <property type="match status" value="1"/>
</dbReference>
<dbReference type="Pfam" id="PF00560">
    <property type="entry name" value="LRR_1"/>
    <property type="match status" value="6"/>
</dbReference>
<dbReference type="Pfam" id="PF23598">
    <property type="entry name" value="LRR_14"/>
    <property type="match status" value="1"/>
</dbReference>
<dbReference type="Pfam" id="PF13855">
    <property type="entry name" value="LRR_8"/>
    <property type="match status" value="1"/>
</dbReference>
<dbReference type="Pfam" id="PF08263">
    <property type="entry name" value="LRRNT_2"/>
    <property type="match status" value="1"/>
</dbReference>
<dbReference type="PRINTS" id="PR00019">
    <property type="entry name" value="LEURICHRPT"/>
</dbReference>
<dbReference type="SMART" id="SM00365">
    <property type="entry name" value="LRR_SD22"/>
    <property type="match status" value="6"/>
</dbReference>
<dbReference type="SMART" id="SM00369">
    <property type="entry name" value="LRR_TYP"/>
    <property type="match status" value="11"/>
</dbReference>
<dbReference type="SUPFAM" id="SSF52058">
    <property type="entry name" value="L domain-like"/>
    <property type="match status" value="2"/>
</dbReference>
<dbReference type="PROSITE" id="PS51450">
    <property type="entry name" value="LRR"/>
    <property type="match status" value="19"/>
</dbReference>
<keyword id="KW-0025">Alternative splicing</keyword>
<keyword id="KW-1003">Cell membrane</keyword>
<keyword id="KW-0325">Glycoprotein</keyword>
<keyword id="KW-0433">Leucine-rich repeat</keyword>
<keyword id="KW-0472">Membrane</keyword>
<keyword id="KW-0675">Receptor</keyword>
<keyword id="KW-1185">Reference proteome</keyword>
<keyword id="KW-0677">Repeat</keyword>
<keyword id="KW-0732">Signal</keyword>
<keyword id="KW-0812">Transmembrane</keyword>
<keyword id="KW-1133">Transmembrane helix</keyword>